<protein>
    <recommendedName>
        <fullName evidence="8">Protein mono-ADP-ribosyltransferase PARP3</fullName>
        <shortName evidence="7">cPARP3</shortName>
        <ecNumber evidence="1">2.4.2.-</ecNumber>
    </recommendedName>
    <alternativeName>
        <fullName>ADP-ribosyltransferase diphtheria toxin-like 3</fullName>
        <shortName>ARTD3</shortName>
    </alternativeName>
    <alternativeName>
        <fullName>DNA ADP-ribosyltransferase PARP3</fullName>
        <ecNumber evidence="1">2.4.2.-</ecNumber>
    </alternativeName>
    <alternativeName>
        <fullName>NAD(+) ADP-ribosyltransferase 3</fullName>
        <shortName>ADPRT-3</shortName>
    </alternativeName>
</protein>
<comment type="function">
    <text evidence="1 6">Mono-ADP-ribosyltransferase that mediates mono-ADP-ribosylation of target proteins and plays a key role in the response to DNA damage (PubMed:27530147). Mediates mono-ADP-ribosylation of glutamate, aspartate or lysine residues on target proteins (By similarity). In contrast to PARP1 and PARP2, it is not able to mediate poly-ADP-ribosylation (By similarity). Involved in DNA repair by mediating mono-ADP-ribosylation of a limited number of acceptor proteins involved in chromatin architecture and in DNA metabolism, such as histone H2B, XRCC5 and XRCC6 (By similarity). ADP-ribosylation follows DNA damage and appears as an obligatory step in a detection/signaling pathway leading to the reparation of DNA strand breaks (By similarity). Involved in single-strand break repair by catalyzing mono-ADP-ribosylation of histone H2B on 'Glu-2' (H2BE2ADPr) of nucleosomes containing nicked DNA (PubMed:27530147). Cooperates with the XRCC5-XRCC6 (Ku80-Ku70) heterodimer to limit end-resection thereby promoting accurate NHEJ (By similarity). Associates with a number of DNA repair factors and is involved in the response to exogenous and endogenous DNA strand breaks (By similarity). Together with APLF, promotes the retention of the LIG4-XRCC4 complex on chromatin and accelerate DNA ligation during non-homologous end-joining (NHEJ) (By similarity). In addition to proteins, also able to ADP-ribosylate DNA: mediates DNA mono-ADP-ribosylation of DNA strand break termini via covalent addition of a single ADP-ribose moiety to a 5'- or 3'-terminal phosphate residues in DNA containing multiple strand breaks (By similarity).</text>
</comment>
<comment type="catalytic activity">
    <reaction evidence="1">
        <text>L-aspartyl-[protein] + NAD(+) = 4-O-(ADP-D-ribosyl)-L-aspartyl-[protein] + nicotinamide</text>
        <dbReference type="Rhea" id="RHEA:54424"/>
        <dbReference type="Rhea" id="RHEA-COMP:9867"/>
        <dbReference type="Rhea" id="RHEA-COMP:13832"/>
        <dbReference type="ChEBI" id="CHEBI:17154"/>
        <dbReference type="ChEBI" id="CHEBI:29961"/>
        <dbReference type="ChEBI" id="CHEBI:57540"/>
        <dbReference type="ChEBI" id="CHEBI:138102"/>
    </reaction>
    <physiologicalReaction direction="left-to-right" evidence="1">
        <dbReference type="Rhea" id="RHEA:54425"/>
    </physiologicalReaction>
</comment>
<comment type="catalytic activity">
    <reaction evidence="1">
        <text>L-glutamyl-[protein] + NAD(+) = 5-O-(ADP-D-ribosyl)-L-glutamyl-[protein] + nicotinamide</text>
        <dbReference type="Rhea" id="RHEA:58224"/>
        <dbReference type="Rhea" id="RHEA-COMP:10208"/>
        <dbReference type="Rhea" id="RHEA-COMP:15089"/>
        <dbReference type="ChEBI" id="CHEBI:17154"/>
        <dbReference type="ChEBI" id="CHEBI:29973"/>
        <dbReference type="ChEBI" id="CHEBI:57540"/>
        <dbReference type="ChEBI" id="CHEBI:142540"/>
    </reaction>
    <physiologicalReaction direction="left-to-right" evidence="1">
        <dbReference type="Rhea" id="RHEA:58225"/>
    </physiologicalReaction>
</comment>
<comment type="catalytic activity">
    <reaction evidence="1">
        <text>L-lysyl-[protein] + NAD(+) = N(6)-(ADP-D-ribosyl)-L-lysyl-[protein] + nicotinamide + H(+)</text>
        <dbReference type="Rhea" id="RHEA:58220"/>
        <dbReference type="Rhea" id="RHEA-COMP:9752"/>
        <dbReference type="Rhea" id="RHEA-COMP:15088"/>
        <dbReference type="ChEBI" id="CHEBI:15378"/>
        <dbReference type="ChEBI" id="CHEBI:17154"/>
        <dbReference type="ChEBI" id="CHEBI:29969"/>
        <dbReference type="ChEBI" id="CHEBI:57540"/>
        <dbReference type="ChEBI" id="CHEBI:142515"/>
    </reaction>
    <physiologicalReaction direction="left-to-right" evidence="1">
        <dbReference type="Rhea" id="RHEA:58221"/>
    </physiologicalReaction>
</comment>
<comment type="subcellular location">
    <subcellularLocation>
        <location evidence="1">Nucleus</location>
    </subcellularLocation>
    <subcellularLocation>
        <location evidence="6">Chromosome</location>
    </subcellularLocation>
    <subcellularLocation>
        <location evidence="1">Cytoplasm</location>
        <location evidence="1">Cytoskeleton</location>
        <location evidence="1">Microtubule organizing center</location>
        <location evidence="1">Centrosome</location>
    </subcellularLocation>
    <subcellularLocation>
        <location evidence="1">Cytoplasm</location>
        <location evidence="1">Cytoskeleton</location>
        <location evidence="1">Microtubule organizing center</location>
        <location evidence="1">Centrosome</location>
        <location evidence="1">Centriole</location>
    </subcellularLocation>
    <text evidence="1 6">Almost exclusively localized in the nucleus and appears in numerous small foci and a small number of larger foci whereas a centrosomal location has not been detected (By similarity). In response to DNA damage, localizes to sites of double-strand break (By similarity). Also localizes to single-strand breaks (PubMed:27530147). Preferentially localized to the daughter centriole (By similarity).</text>
</comment>
<comment type="similarity">
    <text evidence="8">Belongs to the ARTD/PARP family.</text>
</comment>
<gene>
    <name evidence="7" type="primary">PARP3</name>
</gene>
<dbReference type="EC" id="2.4.2.-" evidence="1"/>
<dbReference type="EMBL" id="AADN05000356">
    <property type="status" value="NOT_ANNOTATED_CDS"/>
    <property type="molecule type" value="Genomic_DNA"/>
</dbReference>
<dbReference type="RefSeq" id="XP_015148336.1">
    <property type="nucleotide sequence ID" value="XM_015292850.1"/>
</dbReference>
<dbReference type="RefSeq" id="XP_015148337.1">
    <property type="nucleotide sequence ID" value="XM_015292851.1"/>
</dbReference>
<dbReference type="RefSeq" id="XP_015148338.1">
    <property type="nucleotide sequence ID" value="XM_015292852.1"/>
</dbReference>
<dbReference type="BMRB" id="E1BSI0"/>
<dbReference type="SMR" id="E1BSI0"/>
<dbReference type="FunCoup" id="E1BSI0">
    <property type="interactions" value="85"/>
</dbReference>
<dbReference type="STRING" id="9031.ENSGALP00000007181"/>
<dbReference type="PaxDb" id="9031-ENSGALP00000007181"/>
<dbReference type="GeneID" id="771158"/>
<dbReference type="KEGG" id="gga:771158"/>
<dbReference type="CTD" id="10039"/>
<dbReference type="VEuPathDB" id="HostDB:geneid_771158"/>
<dbReference type="eggNOG" id="KOG1037">
    <property type="taxonomic scope" value="Eukaryota"/>
</dbReference>
<dbReference type="HOGENOM" id="CLU_004841_2_3_1"/>
<dbReference type="InParanoid" id="E1BSI0"/>
<dbReference type="OrthoDB" id="2017365at2759"/>
<dbReference type="TreeFam" id="TF315407"/>
<dbReference type="PRO" id="PR:E1BSI0"/>
<dbReference type="Proteomes" id="UP000000539">
    <property type="component" value="Chromosome 12"/>
</dbReference>
<dbReference type="Bgee" id="ENSGALG00000004517">
    <property type="expression patterns" value="Expressed in granulocyte and 11 other cell types or tissues"/>
</dbReference>
<dbReference type="GO" id="GO:0005814">
    <property type="term" value="C:centriole"/>
    <property type="evidence" value="ECO:0007669"/>
    <property type="project" value="UniProtKB-SubCell"/>
</dbReference>
<dbReference type="GO" id="GO:0005813">
    <property type="term" value="C:centrosome"/>
    <property type="evidence" value="ECO:0007669"/>
    <property type="project" value="UniProtKB-SubCell"/>
</dbReference>
<dbReference type="GO" id="GO:0005737">
    <property type="term" value="C:cytoplasm"/>
    <property type="evidence" value="ECO:0007669"/>
    <property type="project" value="UniProtKB-KW"/>
</dbReference>
<dbReference type="GO" id="GO:0005730">
    <property type="term" value="C:nucleolus"/>
    <property type="evidence" value="ECO:0000318"/>
    <property type="project" value="GO_Central"/>
</dbReference>
<dbReference type="GO" id="GO:0035861">
    <property type="term" value="C:site of double-strand break"/>
    <property type="evidence" value="ECO:0000318"/>
    <property type="project" value="GO_Central"/>
</dbReference>
<dbReference type="GO" id="GO:0003950">
    <property type="term" value="F:NAD+ poly-ADP-ribosyltransferase activity"/>
    <property type="evidence" value="ECO:0000318"/>
    <property type="project" value="GO_Central"/>
</dbReference>
<dbReference type="GO" id="GO:0140806">
    <property type="term" value="F:NAD+-protein-aspartate ADP-ribosyltransferase activity"/>
    <property type="evidence" value="ECO:0007669"/>
    <property type="project" value="RHEA"/>
</dbReference>
<dbReference type="GO" id="GO:0140807">
    <property type="term" value="F:NAD+-protein-glutamate ADP-ribosyltransferase activity"/>
    <property type="evidence" value="ECO:0007669"/>
    <property type="project" value="RHEA"/>
</dbReference>
<dbReference type="GO" id="GO:0140804">
    <property type="term" value="F:NAD+-protein-lysine ADP-ribosyltransferase activity"/>
    <property type="evidence" value="ECO:0007669"/>
    <property type="project" value="RHEA"/>
</dbReference>
<dbReference type="GO" id="GO:0016779">
    <property type="term" value="F:nucleotidyltransferase activity"/>
    <property type="evidence" value="ECO:0007669"/>
    <property type="project" value="UniProtKB-KW"/>
</dbReference>
<dbReference type="GO" id="GO:0006302">
    <property type="term" value="P:double-strand break repair"/>
    <property type="evidence" value="ECO:0000318"/>
    <property type="project" value="GO_Central"/>
</dbReference>
<dbReference type="CDD" id="cd01437">
    <property type="entry name" value="parp_like"/>
    <property type="match status" value="1"/>
</dbReference>
<dbReference type="CDD" id="cd08002">
    <property type="entry name" value="WGR_PARP3_like"/>
    <property type="match status" value="1"/>
</dbReference>
<dbReference type="FunFam" id="1.20.142.10:FF:000006">
    <property type="entry name" value="Poly [ADP-ribose] polymerase"/>
    <property type="match status" value="1"/>
</dbReference>
<dbReference type="FunFam" id="2.20.140.10:FF:000001">
    <property type="entry name" value="Poly [ADP-ribose] polymerase"/>
    <property type="match status" value="1"/>
</dbReference>
<dbReference type="FunFam" id="3.90.228.10:FF:000009">
    <property type="entry name" value="Poly [ADP-ribose] polymerase"/>
    <property type="match status" value="1"/>
</dbReference>
<dbReference type="Gene3D" id="3.90.228.10">
    <property type="match status" value="1"/>
</dbReference>
<dbReference type="Gene3D" id="1.20.142.10">
    <property type="entry name" value="Poly(ADP-ribose) polymerase, regulatory domain"/>
    <property type="match status" value="1"/>
</dbReference>
<dbReference type="Gene3D" id="2.20.140.10">
    <property type="entry name" value="WGR domain"/>
    <property type="match status" value="1"/>
</dbReference>
<dbReference type="InterPro" id="IPR050800">
    <property type="entry name" value="ARTD/PARP"/>
</dbReference>
<dbReference type="InterPro" id="IPR012317">
    <property type="entry name" value="Poly(ADP-ribose)pol_cat_dom"/>
</dbReference>
<dbReference type="InterPro" id="IPR004102">
    <property type="entry name" value="Poly(ADP-ribose)pol_reg_dom"/>
</dbReference>
<dbReference type="InterPro" id="IPR036616">
    <property type="entry name" value="Poly(ADP-ribose)pol_reg_dom_sf"/>
</dbReference>
<dbReference type="InterPro" id="IPR036930">
    <property type="entry name" value="WGR_dom_sf"/>
</dbReference>
<dbReference type="InterPro" id="IPR008893">
    <property type="entry name" value="WGR_domain"/>
</dbReference>
<dbReference type="PANTHER" id="PTHR10459">
    <property type="entry name" value="DNA LIGASE"/>
    <property type="match status" value="1"/>
</dbReference>
<dbReference type="PANTHER" id="PTHR10459:SF66">
    <property type="entry name" value="PROTEIN MONO-ADP-RIBOSYLTRANSFERASE PARP3"/>
    <property type="match status" value="1"/>
</dbReference>
<dbReference type="Pfam" id="PF00644">
    <property type="entry name" value="PARP"/>
    <property type="match status" value="1"/>
</dbReference>
<dbReference type="Pfam" id="PF02877">
    <property type="entry name" value="PARP_reg"/>
    <property type="match status" value="1"/>
</dbReference>
<dbReference type="Pfam" id="PF05406">
    <property type="entry name" value="WGR"/>
    <property type="match status" value="1"/>
</dbReference>
<dbReference type="SMART" id="SM00773">
    <property type="entry name" value="WGR"/>
    <property type="match status" value="1"/>
</dbReference>
<dbReference type="SUPFAM" id="SSF56399">
    <property type="entry name" value="ADP-ribosylation"/>
    <property type="match status" value="1"/>
</dbReference>
<dbReference type="SUPFAM" id="SSF47587">
    <property type="entry name" value="Domain of poly(ADP-ribose) polymerase"/>
    <property type="match status" value="1"/>
</dbReference>
<dbReference type="SUPFAM" id="SSF142921">
    <property type="entry name" value="WGR domain-like"/>
    <property type="match status" value="1"/>
</dbReference>
<dbReference type="PROSITE" id="PS51060">
    <property type="entry name" value="PARP_ALPHA_HD"/>
    <property type="match status" value="1"/>
</dbReference>
<dbReference type="PROSITE" id="PS51059">
    <property type="entry name" value="PARP_CATALYTIC"/>
    <property type="match status" value="1"/>
</dbReference>
<dbReference type="PROSITE" id="PS51977">
    <property type="entry name" value="WGR"/>
    <property type="match status" value="1"/>
</dbReference>
<organism>
    <name type="scientific">Gallus gallus</name>
    <name type="common">Chicken</name>
    <dbReference type="NCBI Taxonomy" id="9031"/>
    <lineage>
        <taxon>Eukaryota</taxon>
        <taxon>Metazoa</taxon>
        <taxon>Chordata</taxon>
        <taxon>Craniata</taxon>
        <taxon>Vertebrata</taxon>
        <taxon>Euteleostomi</taxon>
        <taxon>Archelosauria</taxon>
        <taxon>Archosauria</taxon>
        <taxon>Dinosauria</taxon>
        <taxon>Saurischia</taxon>
        <taxon>Theropoda</taxon>
        <taxon>Coelurosauria</taxon>
        <taxon>Aves</taxon>
        <taxon>Neognathae</taxon>
        <taxon>Galloanserae</taxon>
        <taxon>Galliformes</taxon>
        <taxon>Phasianidae</taxon>
        <taxon>Phasianinae</taxon>
        <taxon>Gallus</taxon>
    </lineage>
</organism>
<keyword id="KW-0013">ADP-ribosylation</keyword>
<keyword id="KW-0158">Chromosome</keyword>
<keyword id="KW-0963">Cytoplasm</keyword>
<keyword id="KW-0206">Cytoskeleton</keyword>
<keyword id="KW-0227">DNA damage</keyword>
<keyword id="KW-0234">DNA repair</keyword>
<keyword id="KW-0328">Glycosyltransferase</keyword>
<keyword id="KW-0520">NAD</keyword>
<keyword id="KW-0548">Nucleotidyltransferase</keyword>
<keyword id="KW-0539">Nucleus</keyword>
<keyword id="KW-1185">Reference proteome</keyword>
<keyword id="KW-0808">Transferase</keyword>
<feature type="chain" id="PRO_0000456428" description="Protein mono-ADP-ribosyltransferase PARP3">
    <location>
        <begin position="1"/>
        <end position="526"/>
    </location>
</feature>
<feature type="domain" description="WGR" evidence="4">
    <location>
        <begin position="61"/>
        <end position="151"/>
    </location>
</feature>
<feature type="domain" description="PARP alpha-helical" evidence="3">
    <location>
        <begin position="183"/>
        <end position="301"/>
    </location>
</feature>
<feature type="domain" description="PARP catalytic" evidence="2">
    <location>
        <begin position="312"/>
        <end position="526"/>
    </location>
</feature>
<feature type="region of interest" description="Disordered" evidence="5">
    <location>
        <begin position="1"/>
        <end position="55"/>
    </location>
</feature>
<feature type="mutagenesis site" description="Does not affect activation by nicked DNA, while it prevents activation by a 3'-overhang substrate." evidence="6">
    <original>Y</original>
    <variation>A</variation>
    <location>
        <position position="85"/>
    </location>
</feature>
<feature type="mutagenesis site" description="Reduced activity on nicked DNA." evidence="6">
    <original>W</original>
    <variation>L</variation>
    <location>
        <position position="102"/>
    </location>
</feature>
<feature type="mutagenesis site" description="Abolished activation by nicked DNA." evidence="6">
    <original>R</original>
    <variation>N</variation>
    <location>
        <position position="104"/>
    </location>
</feature>
<accession>E1BSI0</accession>
<accession>A0A3Q2UAE2</accession>
<reference key="1">
    <citation type="journal article" date="2004" name="Nature">
        <title>Sequence and comparative analysis of the chicken genome provide unique perspectives on vertebrate evolution.</title>
        <authorList>
            <person name="Hillier L.W."/>
            <person name="Miller W."/>
            <person name="Birney E."/>
            <person name="Warren W."/>
            <person name="Hardison R.C."/>
            <person name="Ponting C.P."/>
            <person name="Bork P."/>
            <person name="Burt D.W."/>
            <person name="Groenen M.A.M."/>
            <person name="Delany M.E."/>
            <person name="Dodgson J.B."/>
            <person name="Chinwalla A.T."/>
            <person name="Cliften P.F."/>
            <person name="Clifton S.W."/>
            <person name="Delehaunty K.D."/>
            <person name="Fronick C."/>
            <person name="Fulton R.S."/>
            <person name="Graves T.A."/>
            <person name="Kremitzki C."/>
            <person name="Layman D."/>
            <person name="Magrini V."/>
            <person name="McPherson J.D."/>
            <person name="Miner T.L."/>
            <person name="Minx P."/>
            <person name="Nash W.E."/>
            <person name="Nhan M.N."/>
            <person name="Nelson J.O."/>
            <person name="Oddy L.G."/>
            <person name="Pohl C.S."/>
            <person name="Randall-Maher J."/>
            <person name="Smith S.M."/>
            <person name="Wallis J.W."/>
            <person name="Yang S.-P."/>
            <person name="Romanov M.N."/>
            <person name="Rondelli C.M."/>
            <person name="Paton B."/>
            <person name="Smith J."/>
            <person name="Morrice D."/>
            <person name="Daniels L."/>
            <person name="Tempest H.G."/>
            <person name="Robertson L."/>
            <person name="Masabanda J.S."/>
            <person name="Griffin D.K."/>
            <person name="Vignal A."/>
            <person name="Fillon V."/>
            <person name="Jacobbson L."/>
            <person name="Kerje S."/>
            <person name="Andersson L."/>
            <person name="Crooijmans R.P."/>
            <person name="Aerts J."/>
            <person name="van der Poel J.J."/>
            <person name="Ellegren H."/>
            <person name="Caldwell R.B."/>
            <person name="Hubbard S.J."/>
            <person name="Grafham D.V."/>
            <person name="Kierzek A.M."/>
            <person name="McLaren S.R."/>
            <person name="Overton I.M."/>
            <person name="Arakawa H."/>
            <person name="Beattie K.J."/>
            <person name="Bezzubov Y."/>
            <person name="Boardman P.E."/>
            <person name="Bonfield J.K."/>
            <person name="Croning M.D.R."/>
            <person name="Davies R.M."/>
            <person name="Francis M.D."/>
            <person name="Humphray S.J."/>
            <person name="Scott C.E."/>
            <person name="Taylor R.G."/>
            <person name="Tickle C."/>
            <person name="Brown W.R.A."/>
            <person name="Rogers J."/>
            <person name="Buerstedde J.-M."/>
            <person name="Wilson S.A."/>
            <person name="Stubbs L."/>
            <person name="Ovcharenko I."/>
            <person name="Gordon L."/>
            <person name="Lucas S."/>
            <person name="Miller M.M."/>
            <person name="Inoko H."/>
            <person name="Shiina T."/>
            <person name="Kaufman J."/>
            <person name="Salomonsen J."/>
            <person name="Skjoedt K."/>
            <person name="Wong G.K.-S."/>
            <person name="Wang J."/>
            <person name="Liu B."/>
            <person name="Wang J."/>
            <person name="Yu J."/>
            <person name="Yang H."/>
            <person name="Nefedov M."/>
            <person name="Koriabine M."/>
            <person name="Dejong P.J."/>
            <person name="Goodstadt L."/>
            <person name="Webber C."/>
            <person name="Dickens N.J."/>
            <person name="Letunic I."/>
            <person name="Suyama M."/>
            <person name="Torrents D."/>
            <person name="von Mering C."/>
            <person name="Zdobnov E.M."/>
            <person name="Makova K."/>
            <person name="Nekrutenko A."/>
            <person name="Elnitski L."/>
            <person name="Eswara P."/>
            <person name="King D.C."/>
            <person name="Yang S.-P."/>
            <person name="Tyekucheva S."/>
            <person name="Radakrishnan A."/>
            <person name="Harris R.S."/>
            <person name="Chiaromonte F."/>
            <person name="Taylor J."/>
            <person name="He J."/>
            <person name="Rijnkels M."/>
            <person name="Griffiths-Jones S."/>
            <person name="Ureta-Vidal A."/>
            <person name="Hoffman M.M."/>
            <person name="Severin J."/>
            <person name="Searle S.M.J."/>
            <person name="Law A.S."/>
            <person name="Speed D."/>
            <person name="Waddington D."/>
            <person name="Cheng Z."/>
            <person name="Tuzun E."/>
            <person name="Eichler E."/>
            <person name="Bao Z."/>
            <person name="Flicek P."/>
            <person name="Shteynberg D.D."/>
            <person name="Brent M.R."/>
            <person name="Bye J.M."/>
            <person name="Huckle E.J."/>
            <person name="Chatterji S."/>
            <person name="Dewey C."/>
            <person name="Pachter L."/>
            <person name="Kouranov A."/>
            <person name="Mourelatos Z."/>
            <person name="Hatzigeorgiou A.G."/>
            <person name="Paterson A.H."/>
            <person name="Ivarie R."/>
            <person name="Brandstrom M."/>
            <person name="Axelsson E."/>
            <person name="Backstrom N."/>
            <person name="Berlin S."/>
            <person name="Webster M.T."/>
            <person name="Pourquie O."/>
            <person name="Reymond A."/>
            <person name="Ucla C."/>
            <person name="Antonarakis S.E."/>
            <person name="Long M."/>
            <person name="Emerson J.J."/>
            <person name="Betran E."/>
            <person name="Dupanloup I."/>
            <person name="Kaessmann H."/>
            <person name="Hinrichs A.S."/>
            <person name="Bejerano G."/>
            <person name="Furey T.S."/>
            <person name="Harte R.A."/>
            <person name="Raney B."/>
            <person name="Siepel A."/>
            <person name="Kent W.J."/>
            <person name="Haussler D."/>
            <person name="Eyras E."/>
            <person name="Castelo R."/>
            <person name="Abril J.F."/>
            <person name="Castellano S."/>
            <person name="Camara F."/>
            <person name="Parra G."/>
            <person name="Guigo R."/>
            <person name="Bourque G."/>
            <person name="Tesler G."/>
            <person name="Pevzner P.A."/>
            <person name="Smit A."/>
            <person name="Fulton L.A."/>
            <person name="Mardis E.R."/>
            <person name="Wilson R.K."/>
        </authorList>
    </citation>
    <scope>NUCLEOTIDE SEQUENCE [LARGE SCALE GENOMIC DNA]</scope>
    <source>
        <strain>Red jungle fowl</strain>
    </source>
</reference>
<reference key="2">
    <citation type="journal article" date="2016" name="Nat. Commun.">
        <title>PARP3 is a sensor of nicked nucleosomes and monoribosylates histone H2B(Glu2).</title>
        <authorList>
            <person name="Grundy G.J."/>
            <person name="Polo L.M."/>
            <person name="Zeng Z."/>
            <person name="Rulten S.L."/>
            <person name="Hoch N.C."/>
            <person name="Paomephan P."/>
            <person name="Xu Y."/>
            <person name="Sweet S.M."/>
            <person name="Thorne A.W."/>
            <person name="Oliver A.W."/>
            <person name="Matthews S.J."/>
            <person name="Pearl L.H."/>
            <person name="Caldecott K.W."/>
        </authorList>
    </citation>
    <scope>FUNCTION</scope>
    <scope>SUBCELLULAR LOCATION</scope>
    <scope>MUTAGENESIS OF TYR-85; TRP-102 AND ARG-104</scope>
</reference>
<sequence>MAPKRRAPPASQPADGGKKAKGGQEEEEDAWSSALNALKTAPREKPPATIDGQCPLSAGPDAKVYEDYDCTLNQTNISANNNKFYIIQLIEHGGTYSTWNRWGRVGEVGQSKLLPFTSLEAAKKDFEKKFWEKTKNRWAARDNFVAQPGKYTLIEVQPGAGQEVALRVDGAGDEKVSKRRVLPCALDETTQKLVALIFSSDMFRHAMQAMNIDVKKMPLGKLSKQQIARGFEALEELEAALGEQPRSMSRLEELSSRFYTIVPHNFGRARPPPIDSPELLRAKKDMLLVLADIEVAQSLQAQKVEEEEVVAHPLDRDYALLCCQLTLLEDTSQEYEMILNYVAQTGGQVYVLNVWRVAREGEDKLFQAHDHLEHRRLLWHGTNVAVVAAILKNGLRIMPHSGGRVGKGIYFASENSKSACYVGCTSKRVGLMFLTEVALGKPYCITRDEPTLQQPPNGYDSVQACGRTEPDPAQDVEVTLDGKKVLVCQGKPIPMPAYKDSSFFQSEYLIYQESQCRIRYLVQLHF</sequence>
<evidence type="ECO:0000250" key="1">
    <source>
        <dbReference type="UniProtKB" id="Q9Y6F1"/>
    </source>
</evidence>
<evidence type="ECO:0000255" key="2">
    <source>
        <dbReference type="PROSITE-ProRule" id="PRU00397"/>
    </source>
</evidence>
<evidence type="ECO:0000255" key="3">
    <source>
        <dbReference type="PROSITE-ProRule" id="PRU00398"/>
    </source>
</evidence>
<evidence type="ECO:0000255" key="4">
    <source>
        <dbReference type="PROSITE-ProRule" id="PRU01321"/>
    </source>
</evidence>
<evidence type="ECO:0000256" key="5">
    <source>
        <dbReference type="SAM" id="MobiDB-lite"/>
    </source>
</evidence>
<evidence type="ECO:0000269" key="6">
    <source>
    </source>
</evidence>
<evidence type="ECO:0000303" key="7">
    <source>
    </source>
</evidence>
<evidence type="ECO:0000305" key="8"/>
<name>PARP3_CHICK</name>
<proteinExistence type="evidence at protein level"/>